<reference key="1">
    <citation type="journal article" date="1996" name="Immunogenetics">
        <title>Molecular evolution of the N-formyl peptide and C5a receptors in non-human primates.</title>
        <authorList>
            <person name="Alvarez V."/>
            <person name="Coto E."/>
            <person name="Sehen F."/>
            <person name="Gouzalek-Koces S."/>
            <person name="Lopez-Larrea C."/>
        </authorList>
    </citation>
    <scope>NUCLEOTIDE SEQUENCE [GENOMIC DNA]</scope>
</reference>
<comment type="function">
    <text evidence="1 2">High affinity receptor for N-formyl-methionyl peptides (fMLP), which are powerful neutrophil chemotactic factors. Binding of fMLP to the receptor stimulates intracellular calcium mobilization and superoxide anion release. This response is mediated via a G-protein that activates a phosphatidylinositol-calcium second messenger system (By similarity). Receptor for TAFA4, mediates its effects on chemoattracting macrophages, promoting phagocytosis and increasing ROS release (By similarity). Receptor for cathepsin CTSG, leading to increased phagocyte chemotaxis (By similarity).</text>
</comment>
<comment type="subcellular location">
    <subcellularLocation>
        <location evidence="1 2">Cell membrane</location>
        <topology evidence="3">Multi-pass membrane protein</topology>
    </subcellularLocation>
    <text evidence="1">Internalizes in presence of its ligand, TAFA4.</text>
</comment>
<comment type="PTM">
    <text evidence="1">Phosphorylated; which is necessary for desensitization.</text>
</comment>
<comment type="similarity">
    <text evidence="4">Belongs to the G-protein coupled receptor 1 family.</text>
</comment>
<name>FPR1_PONPY</name>
<proteinExistence type="inferred from homology"/>
<keyword id="KW-1003">Cell membrane</keyword>
<keyword id="KW-0145">Chemotaxis</keyword>
<keyword id="KW-1015">Disulfide bond</keyword>
<keyword id="KW-0297">G-protein coupled receptor</keyword>
<keyword id="KW-0325">Glycoprotein</keyword>
<keyword id="KW-0472">Membrane</keyword>
<keyword id="KW-0597">Phosphoprotein</keyword>
<keyword id="KW-0675">Receptor</keyword>
<keyword id="KW-0807">Transducer</keyword>
<keyword id="KW-0812">Transmembrane</keyword>
<keyword id="KW-1133">Transmembrane helix</keyword>
<dbReference type="EMBL" id="X97735">
    <property type="protein sequence ID" value="CAA66319.1"/>
    <property type="molecule type" value="Genomic_DNA"/>
</dbReference>
<dbReference type="SMR" id="P79235"/>
<dbReference type="GlyCosmos" id="P79235">
    <property type="glycosylation" value="2 sites, No reported glycans"/>
</dbReference>
<dbReference type="GO" id="GO:0005886">
    <property type="term" value="C:plasma membrane"/>
    <property type="evidence" value="ECO:0007669"/>
    <property type="project" value="UniProtKB-SubCell"/>
</dbReference>
<dbReference type="GO" id="GO:0004875">
    <property type="term" value="F:complement receptor activity"/>
    <property type="evidence" value="ECO:0007669"/>
    <property type="project" value="TreeGrafter"/>
</dbReference>
<dbReference type="GO" id="GO:0004930">
    <property type="term" value="F:G protein-coupled receptor activity"/>
    <property type="evidence" value="ECO:0000250"/>
    <property type="project" value="UniProtKB"/>
</dbReference>
<dbReference type="GO" id="GO:0004982">
    <property type="term" value="F:N-formyl peptide receptor activity"/>
    <property type="evidence" value="ECO:0007669"/>
    <property type="project" value="TreeGrafter"/>
</dbReference>
<dbReference type="GO" id="GO:0006935">
    <property type="term" value="P:chemotaxis"/>
    <property type="evidence" value="ECO:0007669"/>
    <property type="project" value="UniProtKB-KW"/>
</dbReference>
<dbReference type="GO" id="GO:0006954">
    <property type="term" value="P:inflammatory response"/>
    <property type="evidence" value="ECO:0007669"/>
    <property type="project" value="TreeGrafter"/>
</dbReference>
<dbReference type="GO" id="GO:0007200">
    <property type="term" value="P:phospholipase C-activating G protein-coupled receptor signaling pathway"/>
    <property type="evidence" value="ECO:0007669"/>
    <property type="project" value="TreeGrafter"/>
</dbReference>
<dbReference type="GO" id="GO:0007204">
    <property type="term" value="P:positive regulation of cytosolic calcium ion concentration"/>
    <property type="evidence" value="ECO:0007669"/>
    <property type="project" value="TreeGrafter"/>
</dbReference>
<dbReference type="FunFam" id="1.20.1070.10:FF:000034">
    <property type="entry name" value="G-protein coupled receptor 1"/>
    <property type="match status" value="1"/>
</dbReference>
<dbReference type="Gene3D" id="1.20.1070.10">
    <property type="entry name" value="Rhodopsin 7-helix transmembrane proteins"/>
    <property type="match status" value="1"/>
</dbReference>
<dbReference type="InterPro" id="IPR000826">
    <property type="entry name" value="Formyl_rcpt-rel"/>
</dbReference>
<dbReference type="InterPro" id="IPR000276">
    <property type="entry name" value="GPCR_Rhodpsn"/>
</dbReference>
<dbReference type="InterPro" id="IPR017452">
    <property type="entry name" value="GPCR_Rhodpsn_7TM"/>
</dbReference>
<dbReference type="PANTHER" id="PTHR24225">
    <property type="entry name" value="CHEMOTACTIC RECEPTOR"/>
    <property type="match status" value="1"/>
</dbReference>
<dbReference type="PANTHER" id="PTHR24225:SF15">
    <property type="entry name" value="FMET-LEU-PHE RECEPTOR"/>
    <property type="match status" value="1"/>
</dbReference>
<dbReference type="Pfam" id="PF00001">
    <property type="entry name" value="7tm_1"/>
    <property type="match status" value="1"/>
</dbReference>
<dbReference type="PRINTS" id="PR00526">
    <property type="entry name" value="FMETLEUPHER"/>
</dbReference>
<dbReference type="PRINTS" id="PR00237">
    <property type="entry name" value="GPCRRHODOPSN"/>
</dbReference>
<dbReference type="SUPFAM" id="SSF81321">
    <property type="entry name" value="Family A G protein-coupled receptor-like"/>
    <property type="match status" value="1"/>
</dbReference>
<dbReference type="PROSITE" id="PS00237">
    <property type="entry name" value="G_PROTEIN_RECEP_F1_1"/>
    <property type="match status" value="1"/>
</dbReference>
<dbReference type="PROSITE" id="PS50262">
    <property type="entry name" value="G_PROTEIN_RECEP_F1_2"/>
    <property type="match status" value="1"/>
</dbReference>
<gene>
    <name type="primary">FPR1</name>
</gene>
<feature type="chain" id="PRO_0000069448" description="fMet-Leu-Phe receptor">
    <location>
        <begin position="1" status="less than"/>
        <end position="346" status="greater than"/>
    </location>
</feature>
<feature type="topological domain" description="Extracellular" evidence="3">
    <location>
        <begin position="1" status="less than"/>
        <end position="24"/>
    </location>
</feature>
<feature type="transmembrane region" description="Helical; Name=1" evidence="3">
    <location>
        <begin position="25"/>
        <end position="47"/>
    </location>
</feature>
<feature type="topological domain" description="Cytoplasmic" evidence="3">
    <location>
        <begin position="48"/>
        <end position="58"/>
    </location>
</feature>
<feature type="transmembrane region" description="Helical; Name=2" evidence="3">
    <location>
        <begin position="59"/>
        <end position="80"/>
    </location>
</feature>
<feature type="topological domain" description="Extracellular" evidence="3">
    <location>
        <begin position="81"/>
        <end position="97"/>
    </location>
</feature>
<feature type="transmembrane region" description="Helical; Name=3" evidence="3">
    <location>
        <begin position="98"/>
        <end position="118"/>
    </location>
</feature>
<feature type="topological domain" description="Cytoplasmic" evidence="3">
    <location>
        <begin position="119"/>
        <end position="137"/>
    </location>
</feature>
<feature type="transmembrane region" description="Helical; Name=4" evidence="3">
    <location>
        <begin position="138"/>
        <end position="159"/>
    </location>
</feature>
<feature type="topological domain" description="Extracellular" evidence="3">
    <location>
        <begin position="160"/>
        <end position="202"/>
    </location>
</feature>
<feature type="transmembrane region" description="Helical; Name=5" evidence="3">
    <location>
        <begin position="203"/>
        <end position="223"/>
    </location>
</feature>
<feature type="topological domain" description="Cytoplasmic" evidence="3">
    <location>
        <begin position="224"/>
        <end position="239"/>
    </location>
</feature>
<feature type="transmembrane region" description="Helical; Name=6" evidence="3">
    <location>
        <begin position="240"/>
        <end position="263"/>
    </location>
</feature>
<feature type="topological domain" description="Extracellular" evidence="3">
    <location>
        <begin position="264"/>
        <end position="282"/>
    </location>
</feature>
<feature type="transmembrane region" description="Helical; Name=7" evidence="3">
    <location>
        <begin position="283"/>
        <end position="302"/>
    </location>
</feature>
<feature type="topological domain" description="Cytoplasmic" evidence="3">
    <location>
        <begin position="303"/>
        <end position="346" status="greater than"/>
    </location>
</feature>
<feature type="region of interest" description="Disordered" evidence="5">
    <location>
        <begin position="324"/>
        <end position="346"/>
    </location>
</feature>
<feature type="compositionally biased region" description="Polar residues" evidence="5">
    <location>
        <begin position="324"/>
        <end position="338"/>
    </location>
</feature>
<feature type="glycosylation site" description="N-linked (GlcNAc...) asparagine" evidence="3">
    <location>
        <position position="1"/>
    </location>
</feature>
<feature type="glycosylation site" description="N-linked (GlcNAc...) asparagine" evidence="3">
    <location>
        <position position="7"/>
    </location>
</feature>
<feature type="disulfide bond" evidence="4">
    <location>
        <begin position="95"/>
        <end position="173"/>
    </location>
</feature>
<feature type="non-terminal residue">
    <location>
        <position position="1"/>
    </location>
</feature>
<feature type="non-terminal residue">
    <location>
        <position position="346"/>
    </location>
</feature>
<organism>
    <name type="scientific">Pongo pygmaeus</name>
    <name type="common">Bornean orangutan</name>
    <dbReference type="NCBI Taxonomy" id="9600"/>
    <lineage>
        <taxon>Eukaryota</taxon>
        <taxon>Metazoa</taxon>
        <taxon>Chordata</taxon>
        <taxon>Craniata</taxon>
        <taxon>Vertebrata</taxon>
        <taxon>Euteleostomi</taxon>
        <taxon>Mammalia</taxon>
        <taxon>Eutheria</taxon>
        <taxon>Euarchontoglires</taxon>
        <taxon>Primates</taxon>
        <taxon>Haplorrhini</taxon>
        <taxon>Catarrhini</taxon>
        <taxon>Hominidae</taxon>
        <taxon>Pongo</taxon>
    </lineage>
</organism>
<evidence type="ECO:0000250" key="1">
    <source>
        <dbReference type="UniProtKB" id="P21462"/>
    </source>
</evidence>
<evidence type="ECO:0000250" key="2">
    <source>
        <dbReference type="UniProtKB" id="P33766"/>
    </source>
</evidence>
<evidence type="ECO:0000255" key="3"/>
<evidence type="ECO:0000255" key="4">
    <source>
        <dbReference type="PROSITE-ProRule" id="PRU00521"/>
    </source>
</evidence>
<evidence type="ECO:0000256" key="5">
    <source>
        <dbReference type="SAM" id="MobiDB-lite"/>
    </source>
</evidence>
<protein>
    <recommendedName>
        <fullName>fMet-Leu-Phe receptor</fullName>
        <shortName>fMLP receptor</shortName>
    </recommendedName>
    <alternativeName>
        <fullName>N-formyl peptide receptor</fullName>
        <shortName>FPR</shortName>
    </alternativeName>
    <alternativeName>
        <fullName>N-formylpeptide chemoattractant receptor</fullName>
    </alternativeName>
</protein>
<sequence>NSSLPTNISGGTPAVSAGYLFLDIITYLVYAVTFVLGVLGNGLVIWVAGFRMTHTVTTISYLNLAVADFCFTSTLPFFMVRKAMGGHWPFGWFLCKFIFTIVDINLFGSVFLIALIALDRCVCVLHPVWTQNHRTVSLAKKVIIGPWVMALLLTLPVIIRVTTVPGKMGTVSCTFNFSPWTNDPKERIKVAIAMLTVRGIIRFIIGFSAPMSIVAVSYGLIATKIHKQGLIKSSRPLRVLSFVAAAFFLCWSPYQVVAFIATVRIRELLQGMYKEISIAVDVTSALAFFNSCLNPMLYVFMGQDFRERLIHSLPASLERALTEASTQTSDTATNSTLPSAEVALQA</sequence>
<accession>P79235</accession>